<keyword id="KW-0963">Cytoplasm</keyword>
<keyword id="KW-0408">Iron</keyword>
<keyword id="KW-0409">Iron storage</keyword>
<keyword id="KW-0479">Metal-binding</keyword>
<keyword id="KW-0560">Oxidoreductase</keyword>
<dbReference type="EC" id="1.16.3.2"/>
<dbReference type="EMBL" id="AP006716">
    <property type="protein sequence ID" value="BAE04369.1"/>
    <property type="molecule type" value="Genomic_DNA"/>
</dbReference>
<dbReference type="RefSeq" id="WP_011275365.1">
    <property type="nucleotide sequence ID" value="NC_007168.1"/>
</dbReference>
<dbReference type="SMR" id="Q4L7K6"/>
<dbReference type="GeneID" id="93780443"/>
<dbReference type="KEGG" id="sha:SH1060"/>
<dbReference type="eggNOG" id="COG1528">
    <property type="taxonomic scope" value="Bacteria"/>
</dbReference>
<dbReference type="HOGENOM" id="CLU_065681_1_2_9"/>
<dbReference type="OrthoDB" id="9801481at2"/>
<dbReference type="Proteomes" id="UP000000543">
    <property type="component" value="Chromosome"/>
</dbReference>
<dbReference type="GO" id="GO:0005829">
    <property type="term" value="C:cytosol"/>
    <property type="evidence" value="ECO:0007669"/>
    <property type="project" value="TreeGrafter"/>
</dbReference>
<dbReference type="GO" id="GO:0008199">
    <property type="term" value="F:ferric iron binding"/>
    <property type="evidence" value="ECO:0007669"/>
    <property type="project" value="InterPro"/>
</dbReference>
<dbReference type="GO" id="GO:0008198">
    <property type="term" value="F:ferrous iron binding"/>
    <property type="evidence" value="ECO:0007669"/>
    <property type="project" value="TreeGrafter"/>
</dbReference>
<dbReference type="GO" id="GO:0004322">
    <property type="term" value="F:ferroxidase activity"/>
    <property type="evidence" value="ECO:0007669"/>
    <property type="project" value="TreeGrafter"/>
</dbReference>
<dbReference type="GO" id="GO:0006879">
    <property type="term" value="P:intracellular iron ion homeostasis"/>
    <property type="evidence" value="ECO:0007669"/>
    <property type="project" value="UniProtKB-KW"/>
</dbReference>
<dbReference type="GO" id="GO:0006826">
    <property type="term" value="P:iron ion transport"/>
    <property type="evidence" value="ECO:0007669"/>
    <property type="project" value="InterPro"/>
</dbReference>
<dbReference type="CDD" id="cd01055">
    <property type="entry name" value="Nonheme_Ferritin"/>
    <property type="match status" value="1"/>
</dbReference>
<dbReference type="FunFam" id="1.20.1260.10:FF:000001">
    <property type="entry name" value="Non-heme ferritin"/>
    <property type="match status" value="1"/>
</dbReference>
<dbReference type="Gene3D" id="1.20.1260.10">
    <property type="match status" value="1"/>
</dbReference>
<dbReference type="InterPro" id="IPR001519">
    <property type="entry name" value="Ferritin"/>
</dbReference>
<dbReference type="InterPro" id="IPR012347">
    <property type="entry name" value="Ferritin-like"/>
</dbReference>
<dbReference type="InterPro" id="IPR009040">
    <property type="entry name" value="Ferritin-like_diiron"/>
</dbReference>
<dbReference type="InterPro" id="IPR009078">
    <property type="entry name" value="Ferritin-like_SF"/>
</dbReference>
<dbReference type="InterPro" id="IPR008331">
    <property type="entry name" value="Ferritin_DPS_dom"/>
</dbReference>
<dbReference type="InterPro" id="IPR041719">
    <property type="entry name" value="Ferritin_prok"/>
</dbReference>
<dbReference type="PANTHER" id="PTHR11431:SF127">
    <property type="entry name" value="BACTERIAL NON-HEME FERRITIN"/>
    <property type="match status" value="1"/>
</dbReference>
<dbReference type="PANTHER" id="PTHR11431">
    <property type="entry name" value="FERRITIN"/>
    <property type="match status" value="1"/>
</dbReference>
<dbReference type="Pfam" id="PF00210">
    <property type="entry name" value="Ferritin"/>
    <property type="match status" value="1"/>
</dbReference>
<dbReference type="SUPFAM" id="SSF47240">
    <property type="entry name" value="Ferritin-like"/>
    <property type="match status" value="1"/>
</dbReference>
<dbReference type="PROSITE" id="PS50905">
    <property type="entry name" value="FERRITIN_LIKE"/>
    <property type="match status" value="1"/>
</dbReference>
<name>FTN_STAHJ</name>
<comment type="function">
    <text evidence="1">Iron-storage protein.</text>
</comment>
<comment type="catalytic activity">
    <reaction>
        <text>4 Fe(2+) + O2 + 6 H2O = 4 iron(III) oxide-hydroxide + 12 H(+)</text>
        <dbReference type="Rhea" id="RHEA:11972"/>
        <dbReference type="ChEBI" id="CHEBI:15377"/>
        <dbReference type="ChEBI" id="CHEBI:15378"/>
        <dbReference type="ChEBI" id="CHEBI:15379"/>
        <dbReference type="ChEBI" id="CHEBI:29033"/>
        <dbReference type="ChEBI" id="CHEBI:78619"/>
        <dbReference type="EC" id="1.16.3.2"/>
    </reaction>
</comment>
<comment type="subcellular location">
    <subcellularLocation>
        <location evidence="1">Cytoplasm</location>
    </subcellularLocation>
</comment>
<comment type="similarity">
    <text evidence="3">Belongs to the ferritin family. Prokaryotic subfamily.</text>
</comment>
<reference key="1">
    <citation type="journal article" date="2005" name="J. Bacteriol.">
        <title>Whole-genome sequencing of Staphylococcus haemolyticus uncovers the extreme plasticity of its genome and the evolution of human-colonizing staphylococcal species.</title>
        <authorList>
            <person name="Takeuchi F."/>
            <person name="Watanabe S."/>
            <person name="Baba T."/>
            <person name="Yuzawa H."/>
            <person name="Ito T."/>
            <person name="Morimoto Y."/>
            <person name="Kuroda M."/>
            <person name="Cui L."/>
            <person name="Takahashi M."/>
            <person name="Ankai A."/>
            <person name="Baba S."/>
            <person name="Fukui S."/>
            <person name="Lee J.C."/>
            <person name="Hiramatsu K."/>
        </authorList>
    </citation>
    <scope>NUCLEOTIDE SEQUENCE [LARGE SCALE GENOMIC DNA]</scope>
    <source>
        <strain>JCSC1435</strain>
    </source>
</reference>
<protein>
    <recommendedName>
        <fullName>Bacterial non-heme ferritin</fullName>
        <ecNumber>1.16.3.2</ecNumber>
    </recommendedName>
</protein>
<organism>
    <name type="scientific">Staphylococcus haemolyticus (strain JCSC1435)</name>
    <dbReference type="NCBI Taxonomy" id="279808"/>
    <lineage>
        <taxon>Bacteria</taxon>
        <taxon>Bacillati</taxon>
        <taxon>Bacillota</taxon>
        <taxon>Bacilli</taxon>
        <taxon>Bacillales</taxon>
        <taxon>Staphylococcaceae</taxon>
        <taxon>Staphylococcus</taxon>
    </lineage>
</organism>
<evidence type="ECO:0000250" key="1"/>
<evidence type="ECO:0000255" key="2">
    <source>
        <dbReference type="PROSITE-ProRule" id="PRU00085"/>
    </source>
</evidence>
<evidence type="ECO:0000305" key="3"/>
<gene>
    <name type="primary">ftnA</name>
    <name type="ordered locus">SH1060</name>
</gene>
<proteinExistence type="inferred from homology"/>
<feature type="initiator methionine" description="Removed" evidence="1">
    <location>
        <position position="1"/>
    </location>
</feature>
<feature type="chain" id="PRO_0000298973" description="Bacterial non-heme ferritin">
    <location>
        <begin position="2"/>
        <end position="166"/>
    </location>
</feature>
<feature type="domain" description="Ferritin-like diiron" evidence="2">
    <location>
        <begin position="2"/>
        <end position="145"/>
    </location>
</feature>
<feature type="binding site" evidence="2">
    <location>
        <position position="17"/>
    </location>
    <ligand>
        <name>Fe cation</name>
        <dbReference type="ChEBI" id="CHEBI:24875"/>
        <label>1</label>
    </ligand>
</feature>
<feature type="binding site" evidence="2">
    <location>
        <position position="50"/>
    </location>
    <ligand>
        <name>Fe cation</name>
        <dbReference type="ChEBI" id="CHEBI:24875"/>
        <label>1</label>
    </ligand>
</feature>
<feature type="binding site" evidence="2">
    <location>
        <position position="50"/>
    </location>
    <ligand>
        <name>Fe cation</name>
        <dbReference type="ChEBI" id="CHEBI:24875"/>
        <label>2</label>
    </ligand>
</feature>
<feature type="binding site" evidence="2">
    <location>
        <position position="53"/>
    </location>
    <ligand>
        <name>Fe cation</name>
        <dbReference type="ChEBI" id="CHEBI:24875"/>
        <label>1</label>
    </ligand>
</feature>
<feature type="binding site" evidence="2">
    <location>
        <position position="94"/>
    </location>
    <ligand>
        <name>Fe cation</name>
        <dbReference type="ChEBI" id="CHEBI:24875"/>
        <label>2</label>
    </ligand>
</feature>
<feature type="binding site" evidence="2">
    <location>
        <position position="127"/>
    </location>
    <ligand>
        <name>Fe cation</name>
        <dbReference type="ChEBI" id="CHEBI:24875"/>
        <label>2</label>
    </ligand>
</feature>
<accession>Q4L7K6</accession>
<sequence>MLSKDLLEALNDQMNHEYFAAHAYMAMAAYCDDASYEGFANFYIQQAKEERFHGKKIYDYINDRGEHAEFKSIPAPKTEFKSILETFKDGLAQEQDVTRRFYNLSEIAQKDKDYATISFLNWFLDEQVEEESTFETHIDYLNRIGDDCNTLYLYEKELAARSFDEE</sequence>